<reference key="1">
    <citation type="journal article" date="2003" name="Lancet">
        <title>Genome sequence of Vibrio parahaemolyticus: a pathogenic mechanism distinct from that of V. cholerae.</title>
        <authorList>
            <person name="Makino K."/>
            <person name="Oshima K."/>
            <person name="Kurokawa K."/>
            <person name="Yokoyama K."/>
            <person name="Uda T."/>
            <person name="Tagomori K."/>
            <person name="Iijima Y."/>
            <person name="Najima M."/>
            <person name="Nakano M."/>
            <person name="Yamashita A."/>
            <person name="Kubota Y."/>
            <person name="Kimura S."/>
            <person name="Yasunaga T."/>
            <person name="Honda T."/>
            <person name="Shinagawa H."/>
            <person name="Hattori M."/>
            <person name="Iida T."/>
        </authorList>
    </citation>
    <scope>NUCLEOTIDE SEQUENCE [LARGE SCALE GENOMIC DNA]</scope>
    <source>
        <strain>RIMD 2210633</strain>
    </source>
</reference>
<feature type="chain" id="PRO_0000170102" description="LexA repressor">
    <location>
        <begin position="1"/>
        <end position="206"/>
    </location>
</feature>
<feature type="DNA-binding region" description="H-T-H motif" evidence="1">
    <location>
        <begin position="28"/>
        <end position="48"/>
    </location>
</feature>
<feature type="active site" description="For autocatalytic cleavage activity" evidence="1">
    <location>
        <position position="123"/>
    </location>
</feature>
<feature type="active site" description="For autocatalytic cleavage activity" evidence="1">
    <location>
        <position position="160"/>
    </location>
</feature>
<feature type="site" description="Cleavage; by autolysis" evidence="1">
    <location>
        <begin position="88"/>
        <end position="89"/>
    </location>
</feature>
<dbReference type="EC" id="3.4.21.88" evidence="1"/>
<dbReference type="EMBL" id="BA000031">
    <property type="protein sequence ID" value="BAC61208.1"/>
    <property type="molecule type" value="Genomic_DNA"/>
</dbReference>
<dbReference type="RefSeq" id="NP_799324.1">
    <property type="nucleotide sequence ID" value="NC_004603.1"/>
</dbReference>
<dbReference type="RefSeq" id="WP_005480871.1">
    <property type="nucleotide sequence ID" value="NC_004603.1"/>
</dbReference>
<dbReference type="SMR" id="Q87KN2"/>
<dbReference type="MEROPS" id="S24.001"/>
<dbReference type="GeneID" id="1190531"/>
<dbReference type="KEGG" id="vpa:VP2945"/>
<dbReference type="PATRIC" id="fig|223926.6.peg.2835"/>
<dbReference type="eggNOG" id="COG1974">
    <property type="taxonomic scope" value="Bacteria"/>
</dbReference>
<dbReference type="HOGENOM" id="CLU_066192_45_3_6"/>
<dbReference type="Proteomes" id="UP000002493">
    <property type="component" value="Chromosome 1"/>
</dbReference>
<dbReference type="CollecTF" id="EXPREG_000010e0"/>
<dbReference type="GO" id="GO:0003677">
    <property type="term" value="F:DNA binding"/>
    <property type="evidence" value="ECO:0007669"/>
    <property type="project" value="UniProtKB-UniRule"/>
</dbReference>
<dbReference type="GO" id="GO:0004252">
    <property type="term" value="F:serine-type endopeptidase activity"/>
    <property type="evidence" value="ECO:0007669"/>
    <property type="project" value="UniProtKB-UniRule"/>
</dbReference>
<dbReference type="GO" id="GO:0006281">
    <property type="term" value="P:DNA repair"/>
    <property type="evidence" value="ECO:0007669"/>
    <property type="project" value="UniProtKB-UniRule"/>
</dbReference>
<dbReference type="GO" id="GO:0006260">
    <property type="term" value="P:DNA replication"/>
    <property type="evidence" value="ECO:0007669"/>
    <property type="project" value="UniProtKB-UniRule"/>
</dbReference>
<dbReference type="GO" id="GO:0045892">
    <property type="term" value="P:negative regulation of DNA-templated transcription"/>
    <property type="evidence" value="ECO:0000269"/>
    <property type="project" value="CollecTF"/>
</dbReference>
<dbReference type="GO" id="GO:0006508">
    <property type="term" value="P:proteolysis"/>
    <property type="evidence" value="ECO:0007669"/>
    <property type="project" value="InterPro"/>
</dbReference>
<dbReference type="GO" id="GO:0009432">
    <property type="term" value="P:SOS response"/>
    <property type="evidence" value="ECO:0007669"/>
    <property type="project" value="UniProtKB-UniRule"/>
</dbReference>
<dbReference type="CDD" id="cd06529">
    <property type="entry name" value="S24_LexA-like"/>
    <property type="match status" value="1"/>
</dbReference>
<dbReference type="FunFam" id="1.10.10.10:FF:000009">
    <property type="entry name" value="LexA repressor"/>
    <property type="match status" value="1"/>
</dbReference>
<dbReference type="FunFam" id="2.10.109.10:FF:000001">
    <property type="entry name" value="LexA repressor"/>
    <property type="match status" value="1"/>
</dbReference>
<dbReference type="Gene3D" id="2.10.109.10">
    <property type="entry name" value="Umud Fragment, subunit A"/>
    <property type="match status" value="1"/>
</dbReference>
<dbReference type="Gene3D" id="1.10.10.10">
    <property type="entry name" value="Winged helix-like DNA-binding domain superfamily/Winged helix DNA-binding domain"/>
    <property type="match status" value="1"/>
</dbReference>
<dbReference type="HAMAP" id="MF_00015">
    <property type="entry name" value="LexA"/>
    <property type="match status" value="1"/>
</dbReference>
<dbReference type="InterPro" id="IPR006200">
    <property type="entry name" value="LexA"/>
</dbReference>
<dbReference type="InterPro" id="IPR039418">
    <property type="entry name" value="LexA-like"/>
</dbReference>
<dbReference type="InterPro" id="IPR036286">
    <property type="entry name" value="LexA/Signal_pep-like_sf"/>
</dbReference>
<dbReference type="InterPro" id="IPR006199">
    <property type="entry name" value="LexA_DNA-bd_dom"/>
</dbReference>
<dbReference type="InterPro" id="IPR050077">
    <property type="entry name" value="LexA_repressor"/>
</dbReference>
<dbReference type="InterPro" id="IPR006197">
    <property type="entry name" value="Peptidase_S24_LexA"/>
</dbReference>
<dbReference type="InterPro" id="IPR015927">
    <property type="entry name" value="Peptidase_S24_S26A/B/C"/>
</dbReference>
<dbReference type="InterPro" id="IPR036388">
    <property type="entry name" value="WH-like_DNA-bd_sf"/>
</dbReference>
<dbReference type="InterPro" id="IPR036390">
    <property type="entry name" value="WH_DNA-bd_sf"/>
</dbReference>
<dbReference type="NCBIfam" id="TIGR00498">
    <property type="entry name" value="lexA"/>
    <property type="match status" value="1"/>
</dbReference>
<dbReference type="PANTHER" id="PTHR33516">
    <property type="entry name" value="LEXA REPRESSOR"/>
    <property type="match status" value="1"/>
</dbReference>
<dbReference type="PANTHER" id="PTHR33516:SF2">
    <property type="entry name" value="LEXA REPRESSOR-RELATED"/>
    <property type="match status" value="1"/>
</dbReference>
<dbReference type="Pfam" id="PF01726">
    <property type="entry name" value="LexA_DNA_bind"/>
    <property type="match status" value="1"/>
</dbReference>
<dbReference type="Pfam" id="PF00717">
    <property type="entry name" value="Peptidase_S24"/>
    <property type="match status" value="1"/>
</dbReference>
<dbReference type="PRINTS" id="PR00726">
    <property type="entry name" value="LEXASERPTASE"/>
</dbReference>
<dbReference type="SUPFAM" id="SSF51306">
    <property type="entry name" value="LexA/Signal peptidase"/>
    <property type="match status" value="1"/>
</dbReference>
<dbReference type="SUPFAM" id="SSF46785">
    <property type="entry name" value="Winged helix' DNA-binding domain"/>
    <property type="match status" value="1"/>
</dbReference>
<gene>
    <name evidence="1" type="primary">lexA</name>
    <name type="ordered locus">VP2945</name>
</gene>
<keyword id="KW-0068">Autocatalytic cleavage</keyword>
<keyword id="KW-0227">DNA damage</keyword>
<keyword id="KW-0234">DNA repair</keyword>
<keyword id="KW-0235">DNA replication</keyword>
<keyword id="KW-0238">DNA-binding</keyword>
<keyword id="KW-0378">Hydrolase</keyword>
<keyword id="KW-0678">Repressor</keyword>
<keyword id="KW-0742">SOS response</keyword>
<keyword id="KW-0804">Transcription</keyword>
<keyword id="KW-0805">Transcription regulation</keyword>
<comment type="function">
    <text evidence="1">Represses a number of genes involved in the response to DNA damage (SOS response), including recA and lexA. In the presence of single-stranded DNA, RecA interacts with LexA causing an autocatalytic cleavage which disrupts the DNA-binding part of LexA, leading to derepression of the SOS regulon and eventually DNA repair.</text>
</comment>
<comment type="catalytic activity">
    <reaction evidence="1">
        <text>Hydrolysis of Ala-|-Gly bond in repressor LexA.</text>
        <dbReference type="EC" id="3.4.21.88"/>
    </reaction>
</comment>
<comment type="subunit">
    <text evidence="1">Homodimer.</text>
</comment>
<comment type="similarity">
    <text evidence="1">Belongs to the peptidase S24 family.</text>
</comment>
<organism>
    <name type="scientific">Vibrio parahaemolyticus serotype O3:K6 (strain RIMD 2210633)</name>
    <dbReference type="NCBI Taxonomy" id="223926"/>
    <lineage>
        <taxon>Bacteria</taxon>
        <taxon>Pseudomonadati</taxon>
        <taxon>Pseudomonadota</taxon>
        <taxon>Gammaproteobacteria</taxon>
        <taxon>Vibrionales</taxon>
        <taxon>Vibrionaceae</taxon>
        <taxon>Vibrio</taxon>
    </lineage>
</organism>
<proteinExistence type="inferred from homology"/>
<evidence type="ECO:0000255" key="1">
    <source>
        <dbReference type="HAMAP-Rule" id="MF_00015"/>
    </source>
</evidence>
<accession>Q87KN2</accession>
<name>LEXA_VIBPA</name>
<sequence>MKPLTPRQQQVFDLIKSKIDDTGMPPTRAEIARELGFRSANAAEEHLKALARKQAIEIIPGASRGIRILLEDAANDEQGLPLIGQVAAGEPILAQEHVEAHYQVDPAMFKPQADFLLRVNGESMKDIGIMDGDLLAVHKTQDVRDGQVVVARVDDDVTVKRLERKGSTVLLHAENEEFAPIQVDLTSQHLTIEGLAVGIIRNTDWM</sequence>
<protein>
    <recommendedName>
        <fullName evidence="1">LexA repressor</fullName>
        <ecNumber evidence="1">3.4.21.88</ecNumber>
    </recommendedName>
</protein>